<organism>
    <name type="scientific">Oryza sativa subsp. japonica</name>
    <name type="common">Rice</name>
    <dbReference type="NCBI Taxonomy" id="39947"/>
    <lineage>
        <taxon>Eukaryota</taxon>
        <taxon>Viridiplantae</taxon>
        <taxon>Streptophyta</taxon>
        <taxon>Embryophyta</taxon>
        <taxon>Tracheophyta</taxon>
        <taxon>Spermatophyta</taxon>
        <taxon>Magnoliopsida</taxon>
        <taxon>Liliopsida</taxon>
        <taxon>Poales</taxon>
        <taxon>Poaceae</taxon>
        <taxon>BOP clade</taxon>
        <taxon>Oryzoideae</taxon>
        <taxon>Oryzeae</taxon>
        <taxon>Oryzinae</taxon>
        <taxon>Oryza</taxon>
        <taxon>Oryza sativa</taxon>
    </lineage>
</organism>
<dbReference type="EC" id="3.1.3.16"/>
<dbReference type="EMBL" id="AP004745">
    <property type="protein sequence ID" value="BAD54191.1"/>
    <property type="status" value="ALT_SEQ"/>
    <property type="molecule type" value="Genomic_DNA"/>
</dbReference>
<dbReference type="EMBL" id="AP005470">
    <property type="protein sequence ID" value="BAD46120.1"/>
    <property type="status" value="ALT_SEQ"/>
    <property type="molecule type" value="Genomic_DNA"/>
</dbReference>
<dbReference type="EMBL" id="AP008212">
    <property type="protein sequence ID" value="BAF19679.1"/>
    <property type="status" value="ALT_SEQ"/>
    <property type="molecule type" value="Genomic_DNA"/>
</dbReference>
<dbReference type="EMBL" id="AP014962">
    <property type="protein sequence ID" value="BAS98041.1"/>
    <property type="molecule type" value="Genomic_DNA"/>
</dbReference>
<dbReference type="EMBL" id="CM000143">
    <property type="status" value="NOT_ANNOTATED_CDS"/>
    <property type="molecule type" value="Genomic_DNA"/>
</dbReference>
<dbReference type="SMR" id="Q652Z7"/>
<dbReference type="FunCoup" id="Q652Z7">
    <property type="interactions" value="220"/>
</dbReference>
<dbReference type="STRING" id="39947.Q652Z7"/>
<dbReference type="PaxDb" id="39947-Q652Z7"/>
<dbReference type="EnsemblPlants" id="Os06t0526700-00">
    <property type="protein sequence ID" value="Os06t0526700-00"/>
    <property type="gene ID" value="Os06g0526700"/>
</dbReference>
<dbReference type="GeneID" id="4341187"/>
<dbReference type="Gramene" id="Os06t0526700-00">
    <property type="protein sequence ID" value="Os06t0526700-00"/>
    <property type="gene ID" value="Os06g0526700"/>
</dbReference>
<dbReference type="KEGG" id="dosa:Os06g0526700"/>
<dbReference type="KEGG" id="osa:4341187"/>
<dbReference type="eggNOG" id="KOG0698">
    <property type="taxonomic scope" value="Eukaryota"/>
</dbReference>
<dbReference type="HOGENOM" id="CLU_013173_0_0_1"/>
<dbReference type="InParanoid" id="Q652Z7"/>
<dbReference type="OMA" id="LQYGTQD"/>
<dbReference type="OrthoDB" id="10264738at2759"/>
<dbReference type="Proteomes" id="UP000000763">
    <property type="component" value="Chromosome 6"/>
</dbReference>
<dbReference type="Proteomes" id="UP000007752">
    <property type="component" value="Chromosome 6"/>
</dbReference>
<dbReference type="Proteomes" id="UP000059680">
    <property type="component" value="Chromosome 6"/>
</dbReference>
<dbReference type="GO" id="GO:0046872">
    <property type="term" value="F:metal ion binding"/>
    <property type="evidence" value="ECO:0007669"/>
    <property type="project" value="UniProtKB-KW"/>
</dbReference>
<dbReference type="GO" id="GO:0004722">
    <property type="term" value="F:protein serine/threonine phosphatase activity"/>
    <property type="evidence" value="ECO:0007669"/>
    <property type="project" value="UniProtKB-EC"/>
</dbReference>
<dbReference type="GO" id="GO:0007165">
    <property type="term" value="P:signal transduction"/>
    <property type="evidence" value="ECO:0000318"/>
    <property type="project" value="GO_Central"/>
</dbReference>
<dbReference type="CDD" id="cd00143">
    <property type="entry name" value="PP2Cc"/>
    <property type="match status" value="1"/>
</dbReference>
<dbReference type="Gene3D" id="3.60.40.10">
    <property type="entry name" value="PPM-type phosphatase domain"/>
    <property type="match status" value="1"/>
</dbReference>
<dbReference type="InterPro" id="IPR015655">
    <property type="entry name" value="PP2C"/>
</dbReference>
<dbReference type="InterPro" id="IPR000222">
    <property type="entry name" value="PP2C_BS"/>
</dbReference>
<dbReference type="InterPro" id="IPR036457">
    <property type="entry name" value="PPM-type-like_dom_sf"/>
</dbReference>
<dbReference type="InterPro" id="IPR001932">
    <property type="entry name" value="PPM-type_phosphatase-like_dom"/>
</dbReference>
<dbReference type="PANTHER" id="PTHR47992">
    <property type="entry name" value="PROTEIN PHOSPHATASE"/>
    <property type="match status" value="1"/>
</dbReference>
<dbReference type="Pfam" id="PF00481">
    <property type="entry name" value="PP2C"/>
    <property type="match status" value="1"/>
</dbReference>
<dbReference type="SMART" id="SM00332">
    <property type="entry name" value="PP2Cc"/>
    <property type="match status" value="1"/>
</dbReference>
<dbReference type="SUPFAM" id="SSF81606">
    <property type="entry name" value="PP2C-like"/>
    <property type="match status" value="1"/>
</dbReference>
<dbReference type="PROSITE" id="PS01032">
    <property type="entry name" value="PPM_1"/>
    <property type="match status" value="1"/>
</dbReference>
<dbReference type="PROSITE" id="PS51746">
    <property type="entry name" value="PPM_2"/>
    <property type="match status" value="1"/>
</dbReference>
<proteinExistence type="evidence at transcript level"/>
<gene>
    <name type="ordered locus">Os06g0526700</name>
    <name type="ordered locus">LOC_Os06g33530</name>
    <name type="ORF">OsJ_020683</name>
    <name type="ORF">OSJNBa0043B22.24</name>
    <name type="ORF">P0001B01.4</name>
</gene>
<name>P2C55_ORYSJ</name>
<sequence length="378" mass="40815">MRRHHLLGLLRRAAASSTSAASSRAGPHPSLHAPGPLRNGGSAPRFFSSRGGAGAASKGLGDDEVELYSLLLGVSIGDEGEASSRGPAASRGGRRGRNSKRQPPRSRFDGDGVGCSKDGKLSWGYSSFQGRRPSMEDRLSIKSTTVNGETVSLFGVFDGHGGPRAAEYLKKHLFKNLVKHPKFLKDTKLAINQTFLKTDADFLQSISSDRYRDDGSTAVAAILIGNRLYVANVGDSRAVALKAGKAVPLSEDHKPNKKDERKRIEDAGGIVVSDDIWRVDGILAVSRAFGNRLMKRYVKAEPNIQEKVVDEGLEYLVLATDGLWDVMRNEDAVSLLKAQDGPKAAAMKLTEVARSRLTLDNVTCIVLQFHHGKSTNSK</sequence>
<comment type="catalytic activity">
    <reaction>
        <text>O-phospho-L-seryl-[protein] + H2O = L-seryl-[protein] + phosphate</text>
        <dbReference type="Rhea" id="RHEA:20629"/>
        <dbReference type="Rhea" id="RHEA-COMP:9863"/>
        <dbReference type="Rhea" id="RHEA-COMP:11604"/>
        <dbReference type="ChEBI" id="CHEBI:15377"/>
        <dbReference type="ChEBI" id="CHEBI:29999"/>
        <dbReference type="ChEBI" id="CHEBI:43474"/>
        <dbReference type="ChEBI" id="CHEBI:83421"/>
        <dbReference type="EC" id="3.1.3.16"/>
    </reaction>
</comment>
<comment type="catalytic activity">
    <reaction>
        <text>O-phospho-L-threonyl-[protein] + H2O = L-threonyl-[protein] + phosphate</text>
        <dbReference type="Rhea" id="RHEA:47004"/>
        <dbReference type="Rhea" id="RHEA-COMP:11060"/>
        <dbReference type="Rhea" id="RHEA-COMP:11605"/>
        <dbReference type="ChEBI" id="CHEBI:15377"/>
        <dbReference type="ChEBI" id="CHEBI:30013"/>
        <dbReference type="ChEBI" id="CHEBI:43474"/>
        <dbReference type="ChEBI" id="CHEBI:61977"/>
        <dbReference type="EC" id="3.1.3.16"/>
    </reaction>
</comment>
<comment type="cofactor">
    <cofactor evidence="1">
        <name>Mg(2+)</name>
        <dbReference type="ChEBI" id="CHEBI:18420"/>
    </cofactor>
    <cofactor evidence="1">
        <name>Mn(2+)</name>
        <dbReference type="ChEBI" id="CHEBI:29035"/>
    </cofactor>
    <text evidence="1">Binds 2 magnesium or manganese ions per subunit.</text>
</comment>
<comment type="similarity">
    <text evidence="4">Belongs to the PP2C family.</text>
</comment>
<comment type="sequence caution" evidence="4">
    <conflict type="erroneous gene model prediction">
        <sequence resource="EMBL-CDS" id="BAD46120"/>
    </conflict>
</comment>
<comment type="sequence caution" evidence="4">
    <conflict type="erroneous gene model prediction">
        <sequence resource="EMBL-CDS" id="BAD54191"/>
    </conflict>
</comment>
<comment type="sequence caution" evidence="4">
    <conflict type="erroneous gene model prediction">
        <sequence resource="EMBL-CDS" id="BAF19679"/>
    </conflict>
</comment>
<feature type="chain" id="PRO_0000363302" description="Probable protein phosphatase 2C 55">
    <location>
        <begin position="1"/>
        <end position="378"/>
    </location>
</feature>
<feature type="domain" description="PPM-type phosphatase" evidence="2">
    <location>
        <begin position="122"/>
        <end position="369"/>
    </location>
</feature>
<feature type="region of interest" description="Disordered" evidence="3">
    <location>
        <begin position="1"/>
        <end position="59"/>
    </location>
</feature>
<feature type="region of interest" description="Disordered" evidence="3">
    <location>
        <begin position="79"/>
        <end position="115"/>
    </location>
</feature>
<feature type="compositionally biased region" description="Low complexity" evidence="3">
    <location>
        <begin position="7"/>
        <end position="26"/>
    </location>
</feature>
<feature type="compositionally biased region" description="Basic residues" evidence="3">
    <location>
        <begin position="92"/>
        <end position="104"/>
    </location>
</feature>
<feature type="binding site" evidence="1">
    <location>
        <position position="158"/>
    </location>
    <ligand>
        <name>Mn(2+)</name>
        <dbReference type="ChEBI" id="CHEBI:29035"/>
        <label>1</label>
    </ligand>
</feature>
<feature type="binding site" evidence="1">
    <location>
        <position position="158"/>
    </location>
    <ligand>
        <name>Mn(2+)</name>
        <dbReference type="ChEBI" id="CHEBI:29035"/>
        <label>2</label>
    </ligand>
</feature>
<feature type="binding site" evidence="1">
    <location>
        <position position="159"/>
    </location>
    <ligand>
        <name>Mn(2+)</name>
        <dbReference type="ChEBI" id="CHEBI:29035"/>
        <label>1</label>
    </ligand>
</feature>
<feature type="binding site" evidence="1">
    <location>
        <position position="321"/>
    </location>
    <ligand>
        <name>Mn(2+)</name>
        <dbReference type="ChEBI" id="CHEBI:29035"/>
        <label>2</label>
    </ligand>
</feature>
<feature type="binding site" evidence="1">
    <location>
        <position position="360"/>
    </location>
    <ligand>
        <name>Mn(2+)</name>
        <dbReference type="ChEBI" id="CHEBI:29035"/>
        <label>2</label>
    </ligand>
</feature>
<keyword id="KW-0378">Hydrolase</keyword>
<keyword id="KW-0460">Magnesium</keyword>
<keyword id="KW-0464">Manganese</keyword>
<keyword id="KW-0479">Metal-binding</keyword>
<keyword id="KW-0904">Protein phosphatase</keyword>
<keyword id="KW-1185">Reference proteome</keyword>
<accession>Q652Z7</accession>
<accession>A0A0N7KM76</accession>
<accession>Q0DBU4</accession>
<reference key="1">
    <citation type="journal article" date="2005" name="Nature">
        <title>The map-based sequence of the rice genome.</title>
        <authorList>
            <consortium name="International rice genome sequencing project (IRGSP)"/>
        </authorList>
    </citation>
    <scope>NUCLEOTIDE SEQUENCE [LARGE SCALE GENOMIC DNA]</scope>
    <source>
        <strain>cv. Nipponbare</strain>
    </source>
</reference>
<reference key="2">
    <citation type="journal article" date="2008" name="Nucleic Acids Res.">
        <title>The rice annotation project database (RAP-DB): 2008 update.</title>
        <authorList>
            <consortium name="The rice annotation project (RAP)"/>
        </authorList>
    </citation>
    <scope>GENOME REANNOTATION</scope>
    <source>
        <strain>cv. Nipponbare</strain>
    </source>
</reference>
<reference key="3">
    <citation type="journal article" date="2013" name="Rice">
        <title>Improvement of the Oryza sativa Nipponbare reference genome using next generation sequence and optical map data.</title>
        <authorList>
            <person name="Kawahara Y."/>
            <person name="de la Bastide M."/>
            <person name="Hamilton J.P."/>
            <person name="Kanamori H."/>
            <person name="McCombie W.R."/>
            <person name="Ouyang S."/>
            <person name="Schwartz D.C."/>
            <person name="Tanaka T."/>
            <person name="Wu J."/>
            <person name="Zhou S."/>
            <person name="Childs K.L."/>
            <person name="Davidson R.M."/>
            <person name="Lin H."/>
            <person name="Quesada-Ocampo L."/>
            <person name="Vaillancourt B."/>
            <person name="Sakai H."/>
            <person name="Lee S.S."/>
            <person name="Kim J."/>
            <person name="Numa H."/>
            <person name="Itoh T."/>
            <person name="Buell C.R."/>
            <person name="Matsumoto T."/>
        </authorList>
    </citation>
    <scope>GENOME REANNOTATION</scope>
    <source>
        <strain>cv. Nipponbare</strain>
    </source>
</reference>
<reference key="4">
    <citation type="journal article" date="2005" name="PLoS Biol.">
        <title>The genomes of Oryza sativa: a history of duplications.</title>
        <authorList>
            <person name="Yu J."/>
            <person name="Wang J."/>
            <person name="Lin W."/>
            <person name="Li S."/>
            <person name="Li H."/>
            <person name="Zhou J."/>
            <person name="Ni P."/>
            <person name="Dong W."/>
            <person name="Hu S."/>
            <person name="Zeng C."/>
            <person name="Zhang J."/>
            <person name="Zhang Y."/>
            <person name="Li R."/>
            <person name="Xu Z."/>
            <person name="Li S."/>
            <person name="Li X."/>
            <person name="Zheng H."/>
            <person name="Cong L."/>
            <person name="Lin L."/>
            <person name="Yin J."/>
            <person name="Geng J."/>
            <person name="Li G."/>
            <person name="Shi J."/>
            <person name="Liu J."/>
            <person name="Lv H."/>
            <person name="Li J."/>
            <person name="Wang J."/>
            <person name="Deng Y."/>
            <person name="Ran L."/>
            <person name="Shi X."/>
            <person name="Wang X."/>
            <person name="Wu Q."/>
            <person name="Li C."/>
            <person name="Ren X."/>
            <person name="Wang J."/>
            <person name="Wang X."/>
            <person name="Li D."/>
            <person name="Liu D."/>
            <person name="Zhang X."/>
            <person name="Ji Z."/>
            <person name="Zhao W."/>
            <person name="Sun Y."/>
            <person name="Zhang Z."/>
            <person name="Bao J."/>
            <person name="Han Y."/>
            <person name="Dong L."/>
            <person name="Ji J."/>
            <person name="Chen P."/>
            <person name="Wu S."/>
            <person name="Liu J."/>
            <person name="Xiao Y."/>
            <person name="Bu D."/>
            <person name="Tan J."/>
            <person name="Yang L."/>
            <person name="Ye C."/>
            <person name="Zhang J."/>
            <person name="Xu J."/>
            <person name="Zhou Y."/>
            <person name="Yu Y."/>
            <person name="Zhang B."/>
            <person name="Zhuang S."/>
            <person name="Wei H."/>
            <person name="Liu B."/>
            <person name="Lei M."/>
            <person name="Yu H."/>
            <person name="Li Y."/>
            <person name="Xu H."/>
            <person name="Wei S."/>
            <person name="He X."/>
            <person name="Fang L."/>
            <person name="Zhang Z."/>
            <person name="Zhang Y."/>
            <person name="Huang X."/>
            <person name="Su Z."/>
            <person name="Tong W."/>
            <person name="Li J."/>
            <person name="Tong Z."/>
            <person name="Li S."/>
            <person name="Ye J."/>
            <person name="Wang L."/>
            <person name="Fang L."/>
            <person name="Lei T."/>
            <person name="Chen C.-S."/>
            <person name="Chen H.-C."/>
            <person name="Xu Z."/>
            <person name="Li H."/>
            <person name="Huang H."/>
            <person name="Zhang F."/>
            <person name="Xu H."/>
            <person name="Li N."/>
            <person name="Zhao C."/>
            <person name="Li S."/>
            <person name="Dong L."/>
            <person name="Huang Y."/>
            <person name="Li L."/>
            <person name="Xi Y."/>
            <person name="Qi Q."/>
            <person name="Li W."/>
            <person name="Zhang B."/>
            <person name="Hu W."/>
            <person name="Zhang Y."/>
            <person name="Tian X."/>
            <person name="Jiao Y."/>
            <person name="Liang X."/>
            <person name="Jin J."/>
            <person name="Gao L."/>
            <person name="Zheng W."/>
            <person name="Hao B."/>
            <person name="Liu S.-M."/>
            <person name="Wang W."/>
            <person name="Yuan L."/>
            <person name="Cao M."/>
            <person name="McDermott J."/>
            <person name="Samudrala R."/>
            <person name="Wang J."/>
            <person name="Wong G.K.-S."/>
            <person name="Yang H."/>
        </authorList>
    </citation>
    <scope>NUCLEOTIDE SEQUENCE [LARGE SCALE GENOMIC DNA]</scope>
    <source>
        <strain>cv. Nipponbare</strain>
    </source>
</reference>
<reference key="5">
    <citation type="journal article" date="2008" name="BMC Genomics">
        <title>Genome-wide and expression analysis of protein phosphatase 2C in rice and Arabidopsis.</title>
        <authorList>
            <person name="Xue T."/>
            <person name="Wang D."/>
            <person name="Zhang S."/>
            <person name="Ehlting J."/>
            <person name="Ni F."/>
            <person name="Jacab S."/>
            <person name="Zheng C."/>
            <person name="Zhong Y."/>
        </authorList>
    </citation>
    <scope>GENE FAMILY</scope>
    <scope>NOMENCLATURE</scope>
</reference>
<protein>
    <recommendedName>
        <fullName>Probable protein phosphatase 2C 55</fullName>
        <shortName>OsPP2C55</shortName>
        <ecNumber>3.1.3.16</ecNumber>
    </recommendedName>
</protein>
<evidence type="ECO:0000250" key="1"/>
<evidence type="ECO:0000255" key="2">
    <source>
        <dbReference type="PROSITE-ProRule" id="PRU01082"/>
    </source>
</evidence>
<evidence type="ECO:0000256" key="3">
    <source>
        <dbReference type="SAM" id="MobiDB-lite"/>
    </source>
</evidence>
<evidence type="ECO:0000305" key="4"/>